<sequence>WIMGHMVNAIAQIDEFVNLGANSIETDVSFDKNANPEYTYHGIPCDCGRTCTKWEYFNTFLGGLRKATTPGDSKYHEKLVLVVFDLKTGSLYDNQAYDAGTKLAKSLLQNYWNKGNNGGRAYIVLSIPNLDHYKLITGFKETLTKEEHPELMDKVGYDFSGNDDIGDVAKAYKKAGVTGHVWQSDGITNCLLRGLDRVRKAVANRDSSNGYINKVYYWTVDKRASTRDALDAGVDGIMTNYPDVIADVLGESAYTAKFRIATYDDNPWETFKN</sequence>
<protein>
    <recommendedName>
        <fullName evidence="6">Dermonecrotic toxin LsaSicTox-alphaIB1avi</fullName>
        <ecNumber evidence="4">4.6.1.-</ecNumber>
    </recommendedName>
    <alternativeName>
        <fullName>Phospholipase D</fullName>
        <shortName>PLD</shortName>
    </alternativeName>
    <alternativeName>
        <fullName>Sphingomyelin phosphodiesterase D</fullName>
        <shortName>SMD</shortName>
        <shortName>SMase D</shortName>
        <shortName>Sphingomyelinase D</shortName>
    </alternativeName>
</protein>
<organism>
    <name type="scientific">Loxosceles sabina</name>
    <name type="common">Tucson recluse spider</name>
    <dbReference type="NCBI Taxonomy" id="571529"/>
    <lineage>
        <taxon>Eukaryota</taxon>
        <taxon>Metazoa</taxon>
        <taxon>Ecdysozoa</taxon>
        <taxon>Arthropoda</taxon>
        <taxon>Chelicerata</taxon>
        <taxon>Arachnida</taxon>
        <taxon>Araneae</taxon>
        <taxon>Araneomorphae</taxon>
        <taxon>Haplogynae</taxon>
        <taxon>Scytodoidea</taxon>
        <taxon>Sicariidae</taxon>
        <taxon>Loxosceles</taxon>
    </lineage>
</organism>
<dbReference type="EC" id="4.6.1.-" evidence="4"/>
<dbReference type="EMBL" id="FJ171425">
    <property type="protein sequence ID" value="ACN48921.1"/>
    <property type="molecule type" value="mRNA"/>
</dbReference>
<dbReference type="SMR" id="C0JAZ0"/>
<dbReference type="GO" id="GO:0005576">
    <property type="term" value="C:extracellular region"/>
    <property type="evidence" value="ECO:0007669"/>
    <property type="project" value="UniProtKB-SubCell"/>
</dbReference>
<dbReference type="GO" id="GO:0016829">
    <property type="term" value="F:lyase activity"/>
    <property type="evidence" value="ECO:0007669"/>
    <property type="project" value="UniProtKB-KW"/>
</dbReference>
<dbReference type="GO" id="GO:0046872">
    <property type="term" value="F:metal ion binding"/>
    <property type="evidence" value="ECO:0007669"/>
    <property type="project" value="UniProtKB-KW"/>
</dbReference>
<dbReference type="GO" id="GO:0008081">
    <property type="term" value="F:phosphoric diester hydrolase activity"/>
    <property type="evidence" value="ECO:0007669"/>
    <property type="project" value="InterPro"/>
</dbReference>
<dbReference type="GO" id="GO:0090729">
    <property type="term" value="F:toxin activity"/>
    <property type="evidence" value="ECO:0007669"/>
    <property type="project" value="UniProtKB-KW"/>
</dbReference>
<dbReference type="GO" id="GO:0031640">
    <property type="term" value="P:killing of cells of another organism"/>
    <property type="evidence" value="ECO:0007669"/>
    <property type="project" value="UniProtKB-KW"/>
</dbReference>
<dbReference type="GO" id="GO:0016042">
    <property type="term" value="P:lipid catabolic process"/>
    <property type="evidence" value="ECO:0007669"/>
    <property type="project" value="UniProtKB-KW"/>
</dbReference>
<dbReference type="CDD" id="cd08576">
    <property type="entry name" value="GDPD_like_SMaseD_PLD"/>
    <property type="match status" value="1"/>
</dbReference>
<dbReference type="Gene3D" id="3.20.20.190">
    <property type="entry name" value="Phosphatidylinositol (PI) phosphodiesterase"/>
    <property type="match status" value="1"/>
</dbReference>
<dbReference type="InterPro" id="IPR017946">
    <property type="entry name" value="PLC-like_Pdiesterase_TIM-brl"/>
</dbReference>
<dbReference type="Pfam" id="PF13653">
    <property type="entry name" value="GDPD_2"/>
    <property type="match status" value="1"/>
</dbReference>
<dbReference type="SUPFAM" id="SSF51695">
    <property type="entry name" value="PLC-like phosphodiesterases"/>
    <property type="match status" value="1"/>
</dbReference>
<comment type="function">
    <text evidence="1 3">Dermonecrotic toxins cleave the phosphodiester linkage between the phosphate and headgroup of certain phospholipids (sphingolipid and lysolipid substrates), forming an alcohol (often choline) and a cyclic phosphate (By similarity). This toxin acts on sphingomyelin (SM) (By similarity). It may also act on ceramide phosphoethanolamine (CPE), lysophosphatidylcholine (LPC) and lysophosphatidylethanolamine (LPE), but not on lysophosphatidylserine (LPS), and lysophosphatidylglycerol (LPG) (By similarity). It acts by transphosphatidylation, releasing exclusively cyclic phosphate products as second products (By similarity). Induces dermonecrosis, hemolysis, increased vascular permeability, edema, inflammatory response, and platelet aggregation (By similarity).</text>
</comment>
<comment type="catalytic activity">
    <reaction evidence="1">
        <text>an N-(acyl)-sphingosylphosphocholine = an N-(acyl)-sphingosyl-1,3-cyclic phosphate + choline</text>
        <dbReference type="Rhea" id="RHEA:60652"/>
        <dbReference type="ChEBI" id="CHEBI:15354"/>
        <dbReference type="ChEBI" id="CHEBI:64583"/>
        <dbReference type="ChEBI" id="CHEBI:143892"/>
    </reaction>
</comment>
<comment type="catalytic activity">
    <reaction evidence="1">
        <text>an N-(acyl)-sphingosylphosphoethanolamine = an N-(acyl)-sphingosyl-1,3-cyclic phosphate + ethanolamine</text>
        <dbReference type="Rhea" id="RHEA:60648"/>
        <dbReference type="ChEBI" id="CHEBI:57603"/>
        <dbReference type="ChEBI" id="CHEBI:143891"/>
        <dbReference type="ChEBI" id="CHEBI:143892"/>
    </reaction>
</comment>
<comment type="catalytic activity">
    <reaction evidence="1">
        <text>a 1-acyl-sn-glycero-3-phosphocholine = a 1-acyl-sn-glycero-2,3-cyclic phosphate + choline</text>
        <dbReference type="Rhea" id="RHEA:60700"/>
        <dbReference type="ChEBI" id="CHEBI:15354"/>
        <dbReference type="ChEBI" id="CHEBI:58168"/>
        <dbReference type="ChEBI" id="CHEBI:143947"/>
    </reaction>
</comment>
<comment type="catalytic activity">
    <reaction evidence="1">
        <text>a 1-acyl-sn-glycero-3-phosphoethanolamine = a 1-acyl-sn-glycero-2,3-cyclic phosphate + ethanolamine</text>
        <dbReference type="Rhea" id="RHEA:60704"/>
        <dbReference type="ChEBI" id="CHEBI:57603"/>
        <dbReference type="ChEBI" id="CHEBI:64381"/>
        <dbReference type="ChEBI" id="CHEBI:143947"/>
    </reaction>
</comment>
<comment type="cofactor">
    <cofactor evidence="5">
        <name>Mg(2+)</name>
        <dbReference type="ChEBI" id="CHEBI:18420"/>
    </cofactor>
    <text evidence="5">Binds 1 Mg(2+) ion per subunit.</text>
</comment>
<comment type="subcellular location">
    <subcellularLocation>
        <location evidence="8">Secreted</location>
    </subcellularLocation>
</comment>
<comment type="tissue specificity">
    <text evidence="8">Expressed by the venom gland.</text>
</comment>
<comment type="similarity">
    <text evidence="7">Belongs to the arthropod phospholipase D family. Class II subfamily.</text>
</comment>
<comment type="caution">
    <text evidence="1 2 4">The most common activity assay for dermonecrotic toxins detects enzymatic activity by monitoring choline release from substrate. Liberation of choline from sphingomyelin (SM) or lysophosphatidylcholine (LPC) is commonly assumed to result from substrate hydrolysis, giving either ceramide-1-phosphate (C1P) or lysophosphatidic acid (LPA), respectively, as a second product. However, two studies from Lajoie and colleagues (2013 and 2015) report the observation of exclusive formation of cyclic phosphate products as second products, resulting from intramolecular transphosphatidylation. Cyclic phosphates have vastly different biological properties from their monoester counterparts, and they may be relevant to the pathology of brown spider envenomation.</text>
</comment>
<accession>C0JAZ0</accession>
<keyword id="KW-0204">Cytolysis</keyword>
<keyword id="KW-1061">Dermonecrotic toxin</keyword>
<keyword id="KW-1015">Disulfide bond</keyword>
<keyword id="KW-0354">Hemolysis</keyword>
<keyword id="KW-0442">Lipid degradation</keyword>
<keyword id="KW-0443">Lipid metabolism</keyword>
<keyword id="KW-0456">Lyase</keyword>
<keyword id="KW-0460">Magnesium</keyword>
<keyword id="KW-0479">Metal-binding</keyword>
<keyword id="KW-0964">Secreted</keyword>
<keyword id="KW-0800">Toxin</keyword>
<name>A1KA6_LOXSA</name>
<proteinExistence type="evidence at transcript level"/>
<reference key="1">
    <citation type="journal article" date="2009" name="Mol. Biol. Evol.">
        <title>Molecular evolution, functional variation, and proposed nomenclature of the gene family that includes sphingomyelinase D in sicariid spider venoms.</title>
        <authorList>
            <person name="Binford G.J."/>
            <person name="Bodner M.R."/>
            <person name="Cordes M.H."/>
            <person name="Baldwin K.L."/>
            <person name="Rynerson M.R."/>
            <person name="Burns S.N."/>
            <person name="Zobel-Thropp P.A."/>
        </authorList>
    </citation>
    <scope>NUCLEOTIDE SEQUENCE [MRNA]</scope>
    <scope>NOMENCLATURE</scope>
    <source>
        <tissue>Venom gland</tissue>
    </source>
</reference>
<evidence type="ECO:0000250" key="1">
    <source>
        <dbReference type="UniProtKB" id="A0A0D4WTV1"/>
    </source>
</evidence>
<evidence type="ECO:0000250" key="2">
    <source>
        <dbReference type="UniProtKB" id="A0A0D4WV12"/>
    </source>
</evidence>
<evidence type="ECO:0000250" key="3">
    <source>
        <dbReference type="UniProtKB" id="P0CE80"/>
    </source>
</evidence>
<evidence type="ECO:0000250" key="4">
    <source>
        <dbReference type="UniProtKB" id="Q4ZFU2"/>
    </source>
</evidence>
<evidence type="ECO:0000250" key="5">
    <source>
        <dbReference type="UniProtKB" id="Q8I914"/>
    </source>
</evidence>
<evidence type="ECO:0000303" key="6">
    <source>
    </source>
</evidence>
<evidence type="ECO:0000305" key="7"/>
<evidence type="ECO:0000305" key="8">
    <source>
    </source>
</evidence>
<feature type="chain" id="PRO_0000392781" description="Dermonecrotic toxin LsaSicTox-alphaIB1avi">
    <location>
        <begin position="1" status="less than"/>
        <end position="273"/>
    </location>
</feature>
<feature type="active site" evidence="5">
    <location>
        <position position="5"/>
    </location>
</feature>
<feature type="active site" description="Nucleophile" evidence="5">
    <location>
        <position position="41"/>
    </location>
</feature>
<feature type="binding site" evidence="5">
    <location>
        <position position="25"/>
    </location>
    <ligand>
        <name>Mg(2+)</name>
        <dbReference type="ChEBI" id="CHEBI:18420"/>
    </ligand>
</feature>
<feature type="binding site" evidence="5">
    <location>
        <position position="27"/>
    </location>
    <ligand>
        <name>Mg(2+)</name>
        <dbReference type="ChEBI" id="CHEBI:18420"/>
    </ligand>
</feature>
<feature type="binding site" evidence="5">
    <location>
        <position position="85"/>
    </location>
    <ligand>
        <name>Mg(2+)</name>
        <dbReference type="ChEBI" id="CHEBI:18420"/>
    </ligand>
</feature>
<feature type="disulfide bond" evidence="3">
    <location>
        <begin position="45"/>
        <end position="51"/>
    </location>
</feature>
<feature type="disulfide bond" evidence="3">
    <location>
        <begin position="47"/>
        <end position="190"/>
    </location>
</feature>
<feature type="non-terminal residue">
    <location>
        <position position="1"/>
    </location>
</feature>